<reference key="1">
    <citation type="journal article" date="2010" name="J. Bacteriol.">
        <title>Genome sequence of the deep-rooted Yersinia pestis strain Angola reveals new insights into the evolution and pangenome of the plague bacterium.</title>
        <authorList>
            <person name="Eppinger M."/>
            <person name="Worsham P.L."/>
            <person name="Nikolich M.P."/>
            <person name="Riley D.R."/>
            <person name="Sebastian Y."/>
            <person name="Mou S."/>
            <person name="Achtman M."/>
            <person name="Lindler L.E."/>
            <person name="Ravel J."/>
        </authorList>
    </citation>
    <scope>NUCLEOTIDE SEQUENCE [LARGE SCALE GENOMIC DNA]</scope>
    <source>
        <strain>Angola</strain>
    </source>
</reference>
<sequence length="163" mass="18350">MPSFDIVSEIDMQEVRNAVENATRDLANRWDFRNVPASFELNEKNESIKVVSESDFQVEQLLDILRAQLSKRGIEGAALEIPEEMARSGKTYSVDAKLKQGIESVQAKKLVKLIKDSKLKVQAQIQGEQVRVTGKARDDLQAVMALVRAADLGQPFQFNNFRD</sequence>
<proteinExistence type="inferred from homology"/>
<keyword id="KW-0547">Nucleotide-binding</keyword>
<gene>
    <name type="ordered locus">YpAngola_A3067</name>
</gene>
<feature type="chain" id="PRO_1000130660" description="Nucleotide-binding protein YpAngola_A3067">
    <location>
        <begin position="1"/>
        <end position="163"/>
    </location>
</feature>
<protein>
    <recommendedName>
        <fullName evidence="1">Nucleotide-binding protein YpAngola_A3067</fullName>
    </recommendedName>
</protein>
<evidence type="ECO:0000255" key="1">
    <source>
        <dbReference type="HAMAP-Rule" id="MF_00632"/>
    </source>
</evidence>
<comment type="function">
    <text evidence="1">Nucleotide-binding protein.</text>
</comment>
<comment type="similarity">
    <text evidence="1">Belongs to the YajQ family.</text>
</comment>
<dbReference type="EMBL" id="CP000901">
    <property type="protein sequence ID" value="ABX85869.1"/>
    <property type="molecule type" value="Genomic_DNA"/>
</dbReference>
<dbReference type="RefSeq" id="WP_002208655.1">
    <property type="nucleotide sequence ID" value="NZ_CP009935.1"/>
</dbReference>
<dbReference type="SMR" id="A9QZR6"/>
<dbReference type="KEGG" id="ypg:YpAngola_A3067"/>
<dbReference type="PATRIC" id="fig|349746.12.peg.4123"/>
<dbReference type="GO" id="GO:0005829">
    <property type="term" value="C:cytosol"/>
    <property type="evidence" value="ECO:0007669"/>
    <property type="project" value="TreeGrafter"/>
</dbReference>
<dbReference type="GO" id="GO:0000166">
    <property type="term" value="F:nucleotide binding"/>
    <property type="evidence" value="ECO:0007669"/>
    <property type="project" value="TreeGrafter"/>
</dbReference>
<dbReference type="CDD" id="cd11740">
    <property type="entry name" value="YajQ_like"/>
    <property type="match status" value="1"/>
</dbReference>
<dbReference type="FunFam" id="3.30.70.860:FF:000001">
    <property type="entry name" value="UPF0234 protein YajQ"/>
    <property type="match status" value="1"/>
</dbReference>
<dbReference type="FunFam" id="3.30.70.990:FF:000001">
    <property type="entry name" value="UPF0234 protein YajQ"/>
    <property type="match status" value="1"/>
</dbReference>
<dbReference type="Gene3D" id="3.30.70.860">
    <property type="match status" value="1"/>
</dbReference>
<dbReference type="Gene3D" id="3.30.70.990">
    <property type="entry name" value="YajQ-like, domain 2"/>
    <property type="match status" value="1"/>
</dbReference>
<dbReference type="HAMAP" id="MF_00632">
    <property type="entry name" value="YajQ"/>
    <property type="match status" value="1"/>
</dbReference>
<dbReference type="InterPro" id="IPR007551">
    <property type="entry name" value="DUF520"/>
</dbReference>
<dbReference type="InterPro" id="IPR035571">
    <property type="entry name" value="UPF0234-like_C"/>
</dbReference>
<dbReference type="InterPro" id="IPR035570">
    <property type="entry name" value="UPF0234_N"/>
</dbReference>
<dbReference type="InterPro" id="IPR036183">
    <property type="entry name" value="YajQ-like_sf"/>
</dbReference>
<dbReference type="NCBIfam" id="NF003819">
    <property type="entry name" value="PRK05412.1"/>
    <property type="match status" value="1"/>
</dbReference>
<dbReference type="PANTHER" id="PTHR30476">
    <property type="entry name" value="UPF0234 PROTEIN YAJQ"/>
    <property type="match status" value="1"/>
</dbReference>
<dbReference type="PANTHER" id="PTHR30476:SF0">
    <property type="entry name" value="UPF0234 PROTEIN YAJQ"/>
    <property type="match status" value="1"/>
</dbReference>
<dbReference type="Pfam" id="PF04461">
    <property type="entry name" value="DUF520"/>
    <property type="match status" value="1"/>
</dbReference>
<dbReference type="SUPFAM" id="SSF89963">
    <property type="entry name" value="YajQ-like"/>
    <property type="match status" value="2"/>
</dbReference>
<name>Y3067_YERPG</name>
<accession>A9QZR6</accession>
<organism>
    <name type="scientific">Yersinia pestis bv. Antiqua (strain Angola)</name>
    <dbReference type="NCBI Taxonomy" id="349746"/>
    <lineage>
        <taxon>Bacteria</taxon>
        <taxon>Pseudomonadati</taxon>
        <taxon>Pseudomonadota</taxon>
        <taxon>Gammaproteobacteria</taxon>
        <taxon>Enterobacterales</taxon>
        <taxon>Yersiniaceae</taxon>
        <taxon>Yersinia</taxon>
    </lineage>
</organism>